<accession>P9WFT0</accession>
<accession>L0TA47</accession>
<accession>O33191</accession>
<accession>P67611</accession>
<keyword id="KW-0030">Aminoacyl-tRNA synthetase</keyword>
<keyword id="KW-0067">ATP-binding</keyword>
<keyword id="KW-0963">Cytoplasm</keyword>
<keyword id="KW-0436">Ligase</keyword>
<keyword id="KW-0547">Nucleotide-binding</keyword>
<keyword id="KW-0648">Protein biosynthesis</keyword>
<keyword id="KW-1185">Reference proteome</keyword>
<keyword id="KW-0694">RNA-binding</keyword>
<dbReference type="EC" id="6.1.1.1" evidence="1"/>
<dbReference type="EMBL" id="AE000516">
    <property type="protein sequence ID" value="AAK45997.1"/>
    <property type="molecule type" value="Genomic_DNA"/>
</dbReference>
<dbReference type="PIR" id="H70501">
    <property type="entry name" value="H70501"/>
</dbReference>
<dbReference type="RefSeq" id="WP_003408375.1">
    <property type="nucleotide sequence ID" value="NZ_KK341227.1"/>
</dbReference>
<dbReference type="SMR" id="P9WFT0"/>
<dbReference type="GeneID" id="45425658"/>
<dbReference type="KEGG" id="mtc:MT1728"/>
<dbReference type="PATRIC" id="fig|83331.31.peg.1855"/>
<dbReference type="HOGENOM" id="CLU_024003_0_2_11"/>
<dbReference type="Proteomes" id="UP000001020">
    <property type="component" value="Chromosome"/>
</dbReference>
<dbReference type="GO" id="GO:0005829">
    <property type="term" value="C:cytosol"/>
    <property type="evidence" value="ECO:0007669"/>
    <property type="project" value="TreeGrafter"/>
</dbReference>
<dbReference type="GO" id="GO:0005524">
    <property type="term" value="F:ATP binding"/>
    <property type="evidence" value="ECO:0007669"/>
    <property type="project" value="UniProtKB-UniRule"/>
</dbReference>
<dbReference type="GO" id="GO:0003723">
    <property type="term" value="F:RNA binding"/>
    <property type="evidence" value="ECO:0007669"/>
    <property type="project" value="UniProtKB-KW"/>
</dbReference>
<dbReference type="GO" id="GO:0004831">
    <property type="term" value="F:tyrosine-tRNA ligase activity"/>
    <property type="evidence" value="ECO:0007669"/>
    <property type="project" value="UniProtKB-UniRule"/>
</dbReference>
<dbReference type="GO" id="GO:0006437">
    <property type="term" value="P:tyrosyl-tRNA aminoacylation"/>
    <property type="evidence" value="ECO:0007669"/>
    <property type="project" value="UniProtKB-UniRule"/>
</dbReference>
<dbReference type="CDD" id="cd00165">
    <property type="entry name" value="S4"/>
    <property type="match status" value="1"/>
</dbReference>
<dbReference type="CDD" id="cd00805">
    <property type="entry name" value="TyrRS_core"/>
    <property type="match status" value="1"/>
</dbReference>
<dbReference type="FunFam" id="1.10.240.10:FF:000001">
    <property type="entry name" value="Tyrosine--tRNA ligase"/>
    <property type="match status" value="1"/>
</dbReference>
<dbReference type="FunFam" id="3.10.290.10:FF:000014">
    <property type="entry name" value="Tyrosine--tRNA ligase"/>
    <property type="match status" value="1"/>
</dbReference>
<dbReference type="FunFam" id="3.40.50.620:FF:000008">
    <property type="entry name" value="Tyrosine--tRNA ligase"/>
    <property type="match status" value="1"/>
</dbReference>
<dbReference type="Gene3D" id="3.40.50.620">
    <property type="entry name" value="HUPs"/>
    <property type="match status" value="1"/>
</dbReference>
<dbReference type="Gene3D" id="3.10.290.10">
    <property type="entry name" value="RNA-binding S4 domain"/>
    <property type="match status" value="1"/>
</dbReference>
<dbReference type="Gene3D" id="1.10.240.10">
    <property type="entry name" value="Tyrosyl-Transfer RNA Synthetase"/>
    <property type="match status" value="1"/>
</dbReference>
<dbReference type="HAMAP" id="MF_02006">
    <property type="entry name" value="Tyr_tRNA_synth_type1"/>
    <property type="match status" value="1"/>
</dbReference>
<dbReference type="InterPro" id="IPR001412">
    <property type="entry name" value="aa-tRNA-synth_I_CS"/>
</dbReference>
<dbReference type="InterPro" id="IPR002305">
    <property type="entry name" value="aa-tRNA-synth_Ic"/>
</dbReference>
<dbReference type="InterPro" id="IPR014729">
    <property type="entry name" value="Rossmann-like_a/b/a_fold"/>
</dbReference>
<dbReference type="InterPro" id="IPR002942">
    <property type="entry name" value="S4_RNA-bd"/>
</dbReference>
<dbReference type="InterPro" id="IPR036986">
    <property type="entry name" value="S4_RNA-bd_sf"/>
</dbReference>
<dbReference type="InterPro" id="IPR054608">
    <property type="entry name" value="SYY-like_C"/>
</dbReference>
<dbReference type="InterPro" id="IPR002307">
    <property type="entry name" value="Tyr-tRNA-ligase"/>
</dbReference>
<dbReference type="InterPro" id="IPR024088">
    <property type="entry name" value="Tyr-tRNA-ligase_bac-type"/>
</dbReference>
<dbReference type="InterPro" id="IPR024107">
    <property type="entry name" value="Tyr-tRNA-ligase_bac_1"/>
</dbReference>
<dbReference type="NCBIfam" id="TIGR00234">
    <property type="entry name" value="tyrS"/>
    <property type="match status" value="1"/>
</dbReference>
<dbReference type="PANTHER" id="PTHR11766:SF0">
    <property type="entry name" value="TYROSINE--TRNA LIGASE, MITOCHONDRIAL"/>
    <property type="match status" value="1"/>
</dbReference>
<dbReference type="PANTHER" id="PTHR11766">
    <property type="entry name" value="TYROSYL-TRNA SYNTHETASE"/>
    <property type="match status" value="1"/>
</dbReference>
<dbReference type="Pfam" id="PF22421">
    <property type="entry name" value="SYY_C-terminal"/>
    <property type="match status" value="1"/>
</dbReference>
<dbReference type="Pfam" id="PF00579">
    <property type="entry name" value="tRNA-synt_1b"/>
    <property type="match status" value="1"/>
</dbReference>
<dbReference type="PRINTS" id="PR01040">
    <property type="entry name" value="TRNASYNTHTYR"/>
</dbReference>
<dbReference type="SMART" id="SM00363">
    <property type="entry name" value="S4"/>
    <property type="match status" value="1"/>
</dbReference>
<dbReference type="SUPFAM" id="SSF55174">
    <property type="entry name" value="Alpha-L RNA-binding motif"/>
    <property type="match status" value="1"/>
</dbReference>
<dbReference type="SUPFAM" id="SSF52374">
    <property type="entry name" value="Nucleotidylyl transferase"/>
    <property type="match status" value="1"/>
</dbReference>
<dbReference type="PROSITE" id="PS00178">
    <property type="entry name" value="AA_TRNA_LIGASE_I"/>
    <property type="match status" value="1"/>
</dbReference>
<dbReference type="PROSITE" id="PS50889">
    <property type="entry name" value="S4"/>
    <property type="match status" value="1"/>
</dbReference>
<feature type="chain" id="PRO_0000428483" description="Tyrosine--tRNA ligase">
    <location>
        <begin position="1"/>
        <end position="424"/>
    </location>
</feature>
<feature type="domain" description="S4 RNA-binding" evidence="1">
    <location>
        <begin position="356"/>
        <end position="413"/>
    </location>
</feature>
<feature type="short sequence motif" description="'HIGH' region">
    <location>
        <begin position="41"/>
        <end position="50"/>
    </location>
</feature>
<feature type="short sequence motif" description="'KMSKS' region">
    <location>
        <begin position="231"/>
        <end position="235"/>
    </location>
</feature>
<feature type="binding site" evidence="1">
    <location>
        <position position="36"/>
    </location>
    <ligand>
        <name>L-tyrosine</name>
        <dbReference type="ChEBI" id="CHEBI:58315"/>
    </ligand>
</feature>
<feature type="binding site" evidence="1">
    <location>
        <position position="171"/>
    </location>
    <ligand>
        <name>L-tyrosine</name>
        <dbReference type="ChEBI" id="CHEBI:58315"/>
    </ligand>
</feature>
<feature type="binding site" evidence="1">
    <location>
        <position position="175"/>
    </location>
    <ligand>
        <name>L-tyrosine</name>
        <dbReference type="ChEBI" id="CHEBI:58315"/>
    </ligand>
</feature>
<feature type="binding site" evidence="1">
    <location>
        <position position="234"/>
    </location>
    <ligand>
        <name>ATP</name>
        <dbReference type="ChEBI" id="CHEBI:30616"/>
    </ligand>
</feature>
<name>SYY_MYCTO</name>
<comment type="function">
    <text evidence="1">Catalyzes the attachment of tyrosine to tRNA(Tyr) in a two-step reaction: tyrosine is first activated by ATP to form Tyr-AMP and then transferred to the acceptor end of tRNA(Tyr).</text>
</comment>
<comment type="catalytic activity">
    <reaction evidence="1">
        <text>tRNA(Tyr) + L-tyrosine + ATP = L-tyrosyl-tRNA(Tyr) + AMP + diphosphate + H(+)</text>
        <dbReference type="Rhea" id="RHEA:10220"/>
        <dbReference type="Rhea" id="RHEA-COMP:9706"/>
        <dbReference type="Rhea" id="RHEA-COMP:9707"/>
        <dbReference type="ChEBI" id="CHEBI:15378"/>
        <dbReference type="ChEBI" id="CHEBI:30616"/>
        <dbReference type="ChEBI" id="CHEBI:33019"/>
        <dbReference type="ChEBI" id="CHEBI:58315"/>
        <dbReference type="ChEBI" id="CHEBI:78442"/>
        <dbReference type="ChEBI" id="CHEBI:78536"/>
        <dbReference type="ChEBI" id="CHEBI:456215"/>
        <dbReference type="EC" id="6.1.1.1"/>
    </reaction>
</comment>
<comment type="subunit">
    <text evidence="1">Homodimer.</text>
</comment>
<comment type="subcellular location">
    <subcellularLocation>
        <location evidence="1">Cytoplasm</location>
    </subcellularLocation>
</comment>
<comment type="similarity">
    <text evidence="1">Belongs to the class-I aminoacyl-tRNA synthetase family. TyrS type 1 subfamily.</text>
</comment>
<reference key="1">
    <citation type="journal article" date="2002" name="J. Bacteriol.">
        <title>Whole-genome comparison of Mycobacterium tuberculosis clinical and laboratory strains.</title>
        <authorList>
            <person name="Fleischmann R.D."/>
            <person name="Alland D."/>
            <person name="Eisen J.A."/>
            <person name="Carpenter L."/>
            <person name="White O."/>
            <person name="Peterson J.D."/>
            <person name="DeBoy R.T."/>
            <person name="Dodson R.J."/>
            <person name="Gwinn M.L."/>
            <person name="Haft D.H."/>
            <person name="Hickey E.K."/>
            <person name="Kolonay J.F."/>
            <person name="Nelson W.C."/>
            <person name="Umayam L.A."/>
            <person name="Ermolaeva M.D."/>
            <person name="Salzberg S.L."/>
            <person name="Delcher A."/>
            <person name="Utterback T.R."/>
            <person name="Weidman J.F."/>
            <person name="Khouri H.M."/>
            <person name="Gill J."/>
            <person name="Mikula A."/>
            <person name="Bishai W."/>
            <person name="Jacobs W.R. Jr."/>
            <person name="Venter J.C."/>
            <person name="Fraser C.M."/>
        </authorList>
    </citation>
    <scope>NUCLEOTIDE SEQUENCE [LARGE SCALE GENOMIC DNA]</scope>
    <source>
        <strain>CDC 1551 / Oshkosh</strain>
    </source>
</reference>
<gene>
    <name evidence="1" type="primary">tyrS</name>
    <name type="ordered locus">MT1728</name>
</gene>
<protein>
    <recommendedName>
        <fullName evidence="1">Tyrosine--tRNA ligase</fullName>
        <ecNumber evidence="1">6.1.1.1</ecNumber>
    </recommendedName>
    <alternativeName>
        <fullName evidence="1">Tyrosyl-tRNA synthetase</fullName>
        <shortName evidence="1">TyrRS</shortName>
    </alternativeName>
</protein>
<sequence length="424" mass="46330">MSGMILDELSWRGLIAQSTDLDTLAAEAQRGPMTVYAGFDPTAPSLHAGHLVPLLTLRRFQRAGHRPIVLAGGATGMIGDPRDVGERSLNEADTVAEWTERIRGQLERFVDFDDSPMGAIVENNLEWTGSLSAIEFLRDIGKHFSVNVMLARDTIRRRLAGEGISYTEFSYLLLQANDYVELHRRHGCTLQIGGADQWGNIIAGVRLVRQKLGATVHALTVPLVTAADGTKFGKSTGGGSLWLDPQMTSPYAWYQYFVNTADADVIRYLRWFTFLSADELAELEQATAQRPQQRAAQRRLASELTVLVHGEAATAAVEHASRALFGRGELARLDEATLAAALRETTVAELKPGSPDGIVDLLVASGLSASKGAARRTIHEGGVSVNNIRVDNEEWVPQSSDFLHGRWLVLRRGKRSIAGVERIG</sequence>
<organism>
    <name type="scientific">Mycobacterium tuberculosis (strain CDC 1551 / Oshkosh)</name>
    <dbReference type="NCBI Taxonomy" id="83331"/>
    <lineage>
        <taxon>Bacteria</taxon>
        <taxon>Bacillati</taxon>
        <taxon>Actinomycetota</taxon>
        <taxon>Actinomycetes</taxon>
        <taxon>Mycobacteriales</taxon>
        <taxon>Mycobacteriaceae</taxon>
        <taxon>Mycobacterium</taxon>
        <taxon>Mycobacterium tuberculosis complex</taxon>
    </lineage>
</organism>
<proteinExistence type="inferred from homology"/>
<evidence type="ECO:0000255" key="1">
    <source>
        <dbReference type="HAMAP-Rule" id="MF_02006"/>
    </source>
</evidence>